<evidence type="ECO:0000250" key="1">
    <source>
        <dbReference type="UniProtKB" id="Q9P9I8"/>
    </source>
</evidence>
<evidence type="ECO:0000255" key="2"/>
<evidence type="ECO:0000255" key="3">
    <source>
        <dbReference type="PROSITE-ProRule" id="PRU00472"/>
    </source>
</evidence>
<evidence type="ECO:0000255" key="4">
    <source>
        <dbReference type="PROSITE-ProRule" id="PRU10145"/>
    </source>
</evidence>
<evidence type="ECO:0000305" key="5"/>
<protein>
    <recommendedName>
        <fullName evidence="1">Transcription factor S</fullName>
    </recommendedName>
    <alternativeName>
        <fullName evidence="1">Transcription elongation factor IIS/RNA polymerase subunit homolog</fullName>
        <shortName evidence="1">TFIIS/RPSU homolog</shortName>
    </alternativeName>
</protein>
<dbReference type="EMBL" id="AE000666">
    <property type="protein sequence ID" value="AAB85792.1"/>
    <property type="status" value="ALT_INIT"/>
    <property type="molecule type" value="Genomic_DNA"/>
</dbReference>
<dbReference type="PIR" id="F69041">
    <property type="entry name" value="F69041"/>
</dbReference>
<dbReference type="RefSeq" id="WP_048061022.1">
    <property type="nucleotide sequence ID" value="NC_000916.1"/>
</dbReference>
<dbReference type="SMR" id="O27369"/>
<dbReference type="FunCoup" id="O27369">
    <property type="interactions" value="103"/>
</dbReference>
<dbReference type="STRING" id="187420.MTH_1314"/>
<dbReference type="PaxDb" id="187420-MTH_1314"/>
<dbReference type="EnsemblBacteria" id="AAB85792">
    <property type="protein sequence ID" value="AAB85792"/>
    <property type="gene ID" value="MTH_1314"/>
</dbReference>
<dbReference type="KEGG" id="mth:MTH_1314"/>
<dbReference type="PATRIC" id="fig|187420.15.peg.1283"/>
<dbReference type="HOGENOM" id="CLU_093932_3_2_2"/>
<dbReference type="InParanoid" id="O27369"/>
<dbReference type="Proteomes" id="UP000005223">
    <property type="component" value="Chromosome"/>
</dbReference>
<dbReference type="GO" id="GO:0000428">
    <property type="term" value="C:DNA-directed RNA polymerase complex"/>
    <property type="evidence" value="ECO:0007669"/>
    <property type="project" value="UniProtKB-KW"/>
</dbReference>
<dbReference type="GO" id="GO:0003677">
    <property type="term" value="F:DNA binding"/>
    <property type="evidence" value="ECO:0007669"/>
    <property type="project" value="UniProtKB-KW"/>
</dbReference>
<dbReference type="GO" id="GO:0003899">
    <property type="term" value="F:DNA-directed RNA polymerase activity"/>
    <property type="evidence" value="ECO:0007669"/>
    <property type="project" value="InterPro"/>
</dbReference>
<dbReference type="GO" id="GO:0008270">
    <property type="term" value="F:zinc ion binding"/>
    <property type="evidence" value="ECO:0000250"/>
    <property type="project" value="UniProtKB"/>
</dbReference>
<dbReference type="GO" id="GO:0006351">
    <property type="term" value="P:DNA-templated transcription"/>
    <property type="evidence" value="ECO:0007669"/>
    <property type="project" value="InterPro"/>
</dbReference>
<dbReference type="GO" id="GO:0006355">
    <property type="term" value="P:regulation of DNA-templated transcription"/>
    <property type="evidence" value="ECO:0000250"/>
    <property type="project" value="UniProtKB"/>
</dbReference>
<dbReference type="CDD" id="cd10511">
    <property type="entry name" value="Zn-ribbon_TFS"/>
    <property type="match status" value="1"/>
</dbReference>
<dbReference type="FunFam" id="2.20.25.10:FF:000029">
    <property type="entry name" value="DNA-directed RNA polymerase subunit M"/>
    <property type="match status" value="1"/>
</dbReference>
<dbReference type="Gene3D" id="2.20.25.10">
    <property type="match status" value="1"/>
</dbReference>
<dbReference type="InterPro" id="IPR019761">
    <property type="entry name" value="DNA-dir_RNA_pol-M_15_CS"/>
</dbReference>
<dbReference type="InterPro" id="IPR012164">
    <property type="entry name" value="Rpa12/Rpb9/Rpc10/TFS"/>
</dbReference>
<dbReference type="InterPro" id="IPR006288">
    <property type="entry name" value="TFS"/>
</dbReference>
<dbReference type="InterPro" id="IPR001529">
    <property type="entry name" value="Zn_ribbon_RPB9"/>
</dbReference>
<dbReference type="InterPro" id="IPR001222">
    <property type="entry name" value="Znf_TFIIS"/>
</dbReference>
<dbReference type="NCBIfam" id="TIGR01384">
    <property type="entry name" value="TFS_arch"/>
    <property type="match status" value="1"/>
</dbReference>
<dbReference type="PANTHER" id="PTHR11239">
    <property type="entry name" value="DNA-DIRECTED RNA POLYMERASE"/>
    <property type="match status" value="1"/>
</dbReference>
<dbReference type="PANTHER" id="PTHR11239:SF12">
    <property type="entry name" value="DNA-DIRECTED RNA POLYMERASE III SUBUNIT RPC10"/>
    <property type="match status" value="1"/>
</dbReference>
<dbReference type="Pfam" id="PF02150">
    <property type="entry name" value="Zn_ribbon_RPB9"/>
    <property type="match status" value="1"/>
</dbReference>
<dbReference type="Pfam" id="PF01096">
    <property type="entry name" value="Zn_ribbon_TFIIS"/>
    <property type="match status" value="1"/>
</dbReference>
<dbReference type="PIRSF" id="PIRSF005586">
    <property type="entry name" value="RNApol_RpoM"/>
    <property type="match status" value="1"/>
</dbReference>
<dbReference type="SMART" id="SM00661">
    <property type="entry name" value="RPOL9"/>
    <property type="match status" value="1"/>
</dbReference>
<dbReference type="SMART" id="SM00440">
    <property type="entry name" value="ZnF_C2C2"/>
    <property type="match status" value="1"/>
</dbReference>
<dbReference type="SUPFAM" id="SSF57783">
    <property type="entry name" value="Zinc beta-ribbon"/>
    <property type="match status" value="1"/>
</dbReference>
<dbReference type="PROSITE" id="PS01030">
    <property type="entry name" value="RNA_POL_M_15KD"/>
    <property type="match status" value="1"/>
</dbReference>
<dbReference type="PROSITE" id="PS00466">
    <property type="entry name" value="ZF_TFIIS_1"/>
    <property type="match status" value="1"/>
</dbReference>
<dbReference type="PROSITE" id="PS51133">
    <property type="entry name" value="ZF_TFIIS_2"/>
    <property type="match status" value="1"/>
</dbReference>
<reference key="1">
    <citation type="journal article" date="1997" name="J. Bacteriol.">
        <title>Complete genome sequence of Methanobacterium thermoautotrophicum deltaH: functional analysis and comparative genomics.</title>
        <authorList>
            <person name="Smith D.R."/>
            <person name="Doucette-Stamm L.A."/>
            <person name="Deloughery C."/>
            <person name="Lee H.-M."/>
            <person name="Dubois J."/>
            <person name="Aldredge T."/>
            <person name="Bashirzadeh R."/>
            <person name="Blakely D."/>
            <person name="Cook R."/>
            <person name="Gilbert K."/>
            <person name="Harrison D."/>
            <person name="Hoang L."/>
            <person name="Keagle P."/>
            <person name="Lumm W."/>
            <person name="Pothier B."/>
            <person name="Qiu D."/>
            <person name="Spadafora R."/>
            <person name="Vicare R."/>
            <person name="Wang Y."/>
            <person name="Wierzbowski J."/>
            <person name="Gibson R."/>
            <person name="Jiwani N."/>
            <person name="Caruso A."/>
            <person name="Bush D."/>
            <person name="Safer H."/>
            <person name="Patwell D."/>
            <person name="Prabhakar S."/>
            <person name="McDougall S."/>
            <person name="Shimer G."/>
            <person name="Goyal A."/>
            <person name="Pietrovski S."/>
            <person name="Church G.M."/>
            <person name="Daniels C.J."/>
            <person name="Mao J.-I."/>
            <person name="Rice P."/>
            <person name="Noelling J."/>
            <person name="Reeve J.N."/>
        </authorList>
    </citation>
    <scope>NUCLEOTIDE SEQUENCE [LARGE SCALE GENOMIC DNA]</scope>
    <source>
        <strain>ATCC 29096 / DSM 1053 / JCM 10044 / NBRC 100330 / Delta H</strain>
    </source>
</reference>
<proteinExistence type="inferred from homology"/>
<keyword id="KW-0238">DNA-binding</keyword>
<keyword id="KW-0240">DNA-directed RNA polymerase</keyword>
<keyword id="KW-0479">Metal-binding</keyword>
<keyword id="KW-1185">Reference proteome</keyword>
<keyword id="KW-0804">Transcription</keyword>
<keyword id="KW-0805">Transcription regulation</keyword>
<keyword id="KW-0862">Zinc</keyword>
<keyword id="KW-0863">Zinc-finger</keyword>
<accession>O27369</accession>
<sequence>MEFCPKCGAVMFPSEGKFKCQCGYEKDITDKLKDKYRVSEEVEAKETIIFTGDDVNTLPTTRVECPKCGNMEAFWWLQQTRRADESETRFFRCTRCKHTWREYD</sequence>
<gene>
    <name evidence="1" type="primary">tfs</name>
    <name type="ordered locus">MTH_1314</name>
</gene>
<comment type="function">
    <text evidence="1">Induces RNA cleavage activity in the RNA polymerase. In its presence, the cleavage activity of the RNA polymerase truncates the RNA back to position +15 in a stepwise manner by releasing mainly dinucleotides from the 3'-end of the nascent RNA. The truncated RNAs are able to continue elongation. Involved in transcriptional proofreading and fidelity. Misincorporation of nucleotides during elongation of transcription leads to arrested elongation complexes which are rescued by TFS-promoted removal of a dinucleotide from the 3'-end. TFS is able to induce a cleavage resynthesis cycle in stalled elongation complexes (resulting from the next missing nucleotide or a reduced incorporation rate of a wrong nucleotide) preventing misincorporation and enabling proofreading in a post-incorporation manner. Pausing of elongation complexes is the main determinant of TFS-induced RNA cleavage.</text>
</comment>
<comment type="similarity">
    <text evidence="5">Belongs to the archaeal RpoM/eukaryotic RPA12/RPB9/RPC11 RNA polymerase family.</text>
</comment>
<comment type="caution">
    <text evidence="5">More similar by sequence similarity to the eukaryotic RNA polymerase subunits.</text>
</comment>
<comment type="sequence caution" evidence="5">
    <conflict type="erroneous initiation">
        <sequence resource="EMBL-CDS" id="AAB85792"/>
    </conflict>
    <text>Extended N-terminus.</text>
</comment>
<feature type="chain" id="PRO_0000121482" description="Transcription factor S">
    <location>
        <begin position="1"/>
        <end position="104"/>
    </location>
</feature>
<feature type="zinc finger region" description="C4-type" evidence="2">
    <location>
        <begin position="4"/>
        <end position="22"/>
    </location>
</feature>
<feature type="zinc finger region" description="TFIIS-type" evidence="3">
    <location>
        <begin position="61"/>
        <end position="101"/>
    </location>
</feature>
<feature type="binding site" evidence="4">
    <location>
        <position position="4"/>
    </location>
    <ligand>
        <name>Zn(2+)</name>
        <dbReference type="ChEBI" id="CHEBI:29105"/>
        <label>1</label>
    </ligand>
</feature>
<feature type="binding site" evidence="4">
    <location>
        <position position="7"/>
    </location>
    <ligand>
        <name>Zn(2+)</name>
        <dbReference type="ChEBI" id="CHEBI:29105"/>
        <label>1</label>
    </ligand>
</feature>
<feature type="binding site" evidence="4">
    <location>
        <position position="20"/>
    </location>
    <ligand>
        <name>Zn(2+)</name>
        <dbReference type="ChEBI" id="CHEBI:29105"/>
        <label>1</label>
    </ligand>
</feature>
<feature type="binding site" evidence="4">
    <location>
        <position position="22"/>
    </location>
    <ligand>
        <name>Zn(2+)</name>
        <dbReference type="ChEBI" id="CHEBI:29105"/>
        <label>1</label>
    </ligand>
</feature>
<feature type="binding site" evidence="3">
    <location>
        <position position="65"/>
    </location>
    <ligand>
        <name>Zn(2+)</name>
        <dbReference type="ChEBI" id="CHEBI:29105"/>
        <label>2</label>
    </ligand>
</feature>
<feature type="binding site" evidence="3">
    <location>
        <position position="68"/>
    </location>
    <ligand>
        <name>Zn(2+)</name>
        <dbReference type="ChEBI" id="CHEBI:29105"/>
        <label>2</label>
    </ligand>
</feature>
<feature type="binding site" evidence="3">
    <location>
        <position position="93"/>
    </location>
    <ligand>
        <name>Zn(2+)</name>
        <dbReference type="ChEBI" id="CHEBI:29105"/>
        <label>2</label>
    </ligand>
</feature>
<feature type="binding site" evidence="3">
    <location>
        <position position="96"/>
    </location>
    <ligand>
        <name>Zn(2+)</name>
        <dbReference type="ChEBI" id="CHEBI:29105"/>
        <label>2</label>
    </ligand>
</feature>
<name>TFS_METTH</name>
<organism>
    <name type="scientific">Methanothermobacter thermautotrophicus (strain ATCC 29096 / DSM 1053 / JCM 10044 / NBRC 100330 / Delta H)</name>
    <name type="common">Methanobacterium thermoautotrophicum</name>
    <dbReference type="NCBI Taxonomy" id="187420"/>
    <lineage>
        <taxon>Archaea</taxon>
        <taxon>Methanobacteriati</taxon>
        <taxon>Methanobacteriota</taxon>
        <taxon>Methanomada group</taxon>
        <taxon>Methanobacteria</taxon>
        <taxon>Methanobacteriales</taxon>
        <taxon>Methanobacteriaceae</taxon>
        <taxon>Methanothermobacter</taxon>
    </lineage>
</organism>